<comment type="function">
    <text evidence="1">Catalyzes the ATP-dependent conversion of 7-carboxy-7-deazaguanine (CDG) to 7-cyano-7-deazaguanine (preQ(0)).</text>
</comment>
<comment type="catalytic activity">
    <reaction evidence="1">
        <text>7-carboxy-7-deazaguanine + NH4(+) + ATP = 7-cyano-7-deazaguanine + ADP + phosphate + H2O + H(+)</text>
        <dbReference type="Rhea" id="RHEA:27982"/>
        <dbReference type="ChEBI" id="CHEBI:15377"/>
        <dbReference type="ChEBI" id="CHEBI:15378"/>
        <dbReference type="ChEBI" id="CHEBI:28938"/>
        <dbReference type="ChEBI" id="CHEBI:30616"/>
        <dbReference type="ChEBI" id="CHEBI:43474"/>
        <dbReference type="ChEBI" id="CHEBI:45075"/>
        <dbReference type="ChEBI" id="CHEBI:61036"/>
        <dbReference type="ChEBI" id="CHEBI:456216"/>
        <dbReference type="EC" id="6.3.4.20"/>
    </reaction>
</comment>
<comment type="cofactor">
    <cofactor evidence="1">
        <name>Zn(2+)</name>
        <dbReference type="ChEBI" id="CHEBI:29105"/>
    </cofactor>
    <text evidence="1">Binds 1 zinc ion per subunit.</text>
</comment>
<comment type="pathway">
    <text evidence="1">Purine metabolism; 7-cyano-7-deazaguanine biosynthesis.</text>
</comment>
<comment type="similarity">
    <text evidence="1">Belongs to the QueC family.</text>
</comment>
<evidence type="ECO:0000255" key="1">
    <source>
        <dbReference type="HAMAP-Rule" id="MF_01633"/>
    </source>
</evidence>
<proteinExistence type="inferred from homology"/>
<organism>
    <name type="scientific">Aliivibrio salmonicida (strain LFI1238)</name>
    <name type="common">Vibrio salmonicida (strain LFI1238)</name>
    <dbReference type="NCBI Taxonomy" id="316275"/>
    <lineage>
        <taxon>Bacteria</taxon>
        <taxon>Pseudomonadati</taxon>
        <taxon>Pseudomonadota</taxon>
        <taxon>Gammaproteobacteria</taxon>
        <taxon>Vibrionales</taxon>
        <taxon>Vibrionaceae</taxon>
        <taxon>Aliivibrio</taxon>
    </lineage>
</organism>
<protein>
    <recommendedName>
        <fullName evidence="1">7-cyano-7-deazaguanine synthase</fullName>
        <ecNumber evidence="1">6.3.4.20</ecNumber>
    </recommendedName>
    <alternativeName>
        <fullName evidence="1">7-cyano-7-carbaguanine synthase</fullName>
    </alternativeName>
    <alternativeName>
        <fullName evidence="1">PreQ(0) synthase</fullName>
    </alternativeName>
    <alternativeName>
        <fullName evidence="1">Queuosine biosynthesis protein QueC</fullName>
    </alternativeName>
</protein>
<dbReference type="EC" id="6.3.4.20" evidence="1"/>
<dbReference type="EMBL" id="FM178379">
    <property type="protein sequence ID" value="CAQ79650.1"/>
    <property type="molecule type" value="Genomic_DNA"/>
</dbReference>
<dbReference type="RefSeq" id="WP_012550525.1">
    <property type="nucleotide sequence ID" value="NC_011312.1"/>
</dbReference>
<dbReference type="SMR" id="B6EH68"/>
<dbReference type="KEGG" id="vsa:VSAL_I1965"/>
<dbReference type="eggNOG" id="COG0603">
    <property type="taxonomic scope" value="Bacteria"/>
</dbReference>
<dbReference type="HOGENOM" id="CLU_081854_0_0_6"/>
<dbReference type="UniPathway" id="UPA00391"/>
<dbReference type="Proteomes" id="UP000001730">
    <property type="component" value="Chromosome 1"/>
</dbReference>
<dbReference type="GO" id="GO:0005524">
    <property type="term" value="F:ATP binding"/>
    <property type="evidence" value="ECO:0007669"/>
    <property type="project" value="UniProtKB-UniRule"/>
</dbReference>
<dbReference type="GO" id="GO:0016879">
    <property type="term" value="F:ligase activity, forming carbon-nitrogen bonds"/>
    <property type="evidence" value="ECO:0007669"/>
    <property type="project" value="UniProtKB-UniRule"/>
</dbReference>
<dbReference type="GO" id="GO:0008270">
    <property type="term" value="F:zinc ion binding"/>
    <property type="evidence" value="ECO:0007669"/>
    <property type="project" value="UniProtKB-UniRule"/>
</dbReference>
<dbReference type="GO" id="GO:0008616">
    <property type="term" value="P:queuosine biosynthetic process"/>
    <property type="evidence" value="ECO:0007669"/>
    <property type="project" value="UniProtKB-UniRule"/>
</dbReference>
<dbReference type="CDD" id="cd01995">
    <property type="entry name" value="QueC-like"/>
    <property type="match status" value="1"/>
</dbReference>
<dbReference type="FunFam" id="3.40.50.620:FF:000017">
    <property type="entry name" value="7-cyano-7-deazaguanine synthase"/>
    <property type="match status" value="1"/>
</dbReference>
<dbReference type="Gene3D" id="3.40.50.620">
    <property type="entry name" value="HUPs"/>
    <property type="match status" value="1"/>
</dbReference>
<dbReference type="HAMAP" id="MF_01633">
    <property type="entry name" value="QueC"/>
    <property type="match status" value="1"/>
</dbReference>
<dbReference type="InterPro" id="IPR018317">
    <property type="entry name" value="QueC"/>
</dbReference>
<dbReference type="InterPro" id="IPR014729">
    <property type="entry name" value="Rossmann-like_a/b/a_fold"/>
</dbReference>
<dbReference type="NCBIfam" id="TIGR00364">
    <property type="entry name" value="7-cyano-7-deazaguanine synthase QueC"/>
    <property type="match status" value="1"/>
</dbReference>
<dbReference type="NCBIfam" id="NF008317">
    <property type="entry name" value="PRK11106.1"/>
    <property type="match status" value="1"/>
</dbReference>
<dbReference type="PANTHER" id="PTHR42914">
    <property type="entry name" value="7-CYANO-7-DEAZAGUANINE SYNTHASE"/>
    <property type="match status" value="1"/>
</dbReference>
<dbReference type="PANTHER" id="PTHR42914:SF1">
    <property type="entry name" value="7-CYANO-7-DEAZAGUANINE SYNTHASE"/>
    <property type="match status" value="1"/>
</dbReference>
<dbReference type="Pfam" id="PF06508">
    <property type="entry name" value="QueC"/>
    <property type="match status" value="1"/>
</dbReference>
<dbReference type="PIRSF" id="PIRSF006293">
    <property type="entry name" value="ExsB"/>
    <property type="match status" value="1"/>
</dbReference>
<dbReference type="SUPFAM" id="SSF52402">
    <property type="entry name" value="Adenine nucleotide alpha hydrolases-like"/>
    <property type="match status" value="1"/>
</dbReference>
<accession>B6EH68</accession>
<gene>
    <name evidence="1" type="primary">queC</name>
    <name type="ordered locus">VSAL_I1965</name>
</gene>
<keyword id="KW-0067">ATP-binding</keyword>
<keyword id="KW-0436">Ligase</keyword>
<keyword id="KW-0479">Metal-binding</keyword>
<keyword id="KW-0547">Nucleotide-binding</keyword>
<keyword id="KW-0671">Queuosine biosynthesis</keyword>
<keyword id="KW-0862">Zinc</keyword>
<feature type="chain" id="PRO_1000186549" description="7-cyano-7-deazaguanine synthase">
    <location>
        <begin position="1"/>
        <end position="227"/>
    </location>
</feature>
<feature type="binding site" evidence="1">
    <location>
        <begin position="8"/>
        <end position="18"/>
    </location>
    <ligand>
        <name>ATP</name>
        <dbReference type="ChEBI" id="CHEBI:30616"/>
    </ligand>
</feature>
<feature type="binding site" evidence="1">
    <location>
        <position position="187"/>
    </location>
    <ligand>
        <name>Zn(2+)</name>
        <dbReference type="ChEBI" id="CHEBI:29105"/>
    </ligand>
</feature>
<feature type="binding site" evidence="1">
    <location>
        <position position="196"/>
    </location>
    <ligand>
        <name>Zn(2+)</name>
        <dbReference type="ChEBI" id="CHEBI:29105"/>
    </ligand>
</feature>
<feature type="binding site" evidence="1">
    <location>
        <position position="199"/>
    </location>
    <ligand>
        <name>Zn(2+)</name>
        <dbReference type="ChEBI" id="CHEBI:29105"/>
    </ligand>
</feature>
<feature type="binding site" evidence="1">
    <location>
        <position position="202"/>
    </location>
    <ligand>
        <name>Zn(2+)</name>
        <dbReference type="ChEBI" id="CHEBI:29105"/>
    </ligand>
</feature>
<name>QUEC_ALISL</name>
<reference key="1">
    <citation type="journal article" date="2008" name="BMC Genomics">
        <title>The genome sequence of the fish pathogen Aliivibrio salmonicida strain LFI1238 shows extensive evidence of gene decay.</title>
        <authorList>
            <person name="Hjerde E."/>
            <person name="Lorentzen M.S."/>
            <person name="Holden M.T."/>
            <person name="Seeger K."/>
            <person name="Paulsen S."/>
            <person name="Bason N."/>
            <person name="Churcher C."/>
            <person name="Harris D."/>
            <person name="Norbertczak H."/>
            <person name="Quail M.A."/>
            <person name="Sanders S."/>
            <person name="Thurston S."/>
            <person name="Parkhill J."/>
            <person name="Willassen N.P."/>
            <person name="Thomson N.R."/>
        </authorList>
    </citation>
    <scope>NUCLEOTIDE SEQUENCE [LARGE SCALE GENOMIC DNA]</scope>
    <source>
        <strain>LFI1238</strain>
    </source>
</reference>
<sequence length="227" mass="24949">MSTAIVVFSGGQDSTTCLIQALTHYDHVHCITFDYGQRHNQEIEVAKSVALDLGATSHKVMDVGLLNELAVSSLTRDNIPVSHELQENGLPNSFVPGRNILFLTLAGIYAYQLGAESVITGVCETDFSGYPDCRDEFVKSINQSLVLGMDRKLKIDTPLMWLNKAETWALADKYGKLDYVRNQTLTCYNGVIGDGCGDCPSCDLRKNGLDDYLANKESVMADLESKI</sequence>